<organism>
    <name type="scientific">Homo sapiens</name>
    <name type="common">Human</name>
    <dbReference type="NCBI Taxonomy" id="9606"/>
    <lineage>
        <taxon>Eukaryota</taxon>
        <taxon>Metazoa</taxon>
        <taxon>Chordata</taxon>
        <taxon>Craniata</taxon>
        <taxon>Vertebrata</taxon>
        <taxon>Euteleostomi</taxon>
        <taxon>Mammalia</taxon>
        <taxon>Eutheria</taxon>
        <taxon>Euarchontoglires</taxon>
        <taxon>Primates</taxon>
        <taxon>Haplorrhini</taxon>
        <taxon>Catarrhini</taxon>
        <taxon>Hominidae</taxon>
        <taxon>Homo</taxon>
    </lineage>
</organism>
<sequence length="224" mass="25261">MTLFHFGNCFALAYFPYFITYKCSGLSEYNAFWKCVQAGVTYLFVQLCKMLFLATFFPTWEGGIYDFIGEFMKASVDVADLIGLNLVMSRNAGKGEYKIMVAALGWATAELIMSRCIPLWVGARGIEFDWKYIQMSIDSNISLVHYIVASAQVWMITRYDLYHTFRPAVLLLMFLSVYKAFVMETFVHLCSLGSWAALLARAVVTGLLALSTLALYVAVVNVHS</sequence>
<proteinExistence type="evidence at protein level"/>
<reference key="1">
    <citation type="submission" date="1998-08" db="EMBL/GenBank/DDBJ databases">
        <title>Cloning of a novel putative seven transmembrane domain protein from human lingual tissue.</title>
        <authorList>
            <person name="Daniell S.J."/>
            <person name="Perry B.N."/>
            <person name="Connerton I.F."/>
        </authorList>
    </citation>
    <scope>NUCLEOTIDE SEQUENCE [MRNA] (ISOFORM 1)</scope>
    <source>
        <tissue>Tongue epithelium</tissue>
    </source>
</reference>
<reference key="2">
    <citation type="journal article" date="2004" name="Nature">
        <title>The DNA sequence and biology of human chromosome 19.</title>
        <authorList>
            <person name="Grimwood J."/>
            <person name="Gordon L.A."/>
            <person name="Olsen A.S."/>
            <person name="Terry A."/>
            <person name="Schmutz J."/>
            <person name="Lamerdin J.E."/>
            <person name="Hellsten U."/>
            <person name="Goodstein D."/>
            <person name="Couronne O."/>
            <person name="Tran-Gyamfi M."/>
            <person name="Aerts A."/>
            <person name="Altherr M."/>
            <person name="Ashworth L."/>
            <person name="Bajorek E."/>
            <person name="Black S."/>
            <person name="Branscomb E."/>
            <person name="Caenepeel S."/>
            <person name="Carrano A.V."/>
            <person name="Caoile C."/>
            <person name="Chan Y.M."/>
            <person name="Christensen M."/>
            <person name="Cleland C.A."/>
            <person name="Copeland A."/>
            <person name="Dalin E."/>
            <person name="Dehal P."/>
            <person name="Denys M."/>
            <person name="Detter J.C."/>
            <person name="Escobar J."/>
            <person name="Flowers D."/>
            <person name="Fotopulos D."/>
            <person name="Garcia C."/>
            <person name="Georgescu A.M."/>
            <person name="Glavina T."/>
            <person name="Gomez M."/>
            <person name="Gonzales E."/>
            <person name="Groza M."/>
            <person name="Hammon N."/>
            <person name="Hawkins T."/>
            <person name="Haydu L."/>
            <person name="Ho I."/>
            <person name="Huang W."/>
            <person name="Israni S."/>
            <person name="Jett J."/>
            <person name="Kadner K."/>
            <person name="Kimball H."/>
            <person name="Kobayashi A."/>
            <person name="Larionov V."/>
            <person name="Leem S.-H."/>
            <person name="Lopez F."/>
            <person name="Lou Y."/>
            <person name="Lowry S."/>
            <person name="Malfatti S."/>
            <person name="Martinez D."/>
            <person name="McCready P.M."/>
            <person name="Medina C."/>
            <person name="Morgan J."/>
            <person name="Nelson K."/>
            <person name="Nolan M."/>
            <person name="Ovcharenko I."/>
            <person name="Pitluck S."/>
            <person name="Pollard M."/>
            <person name="Popkie A.P."/>
            <person name="Predki P."/>
            <person name="Quan G."/>
            <person name="Ramirez L."/>
            <person name="Rash S."/>
            <person name="Retterer J."/>
            <person name="Rodriguez A."/>
            <person name="Rogers S."/>
            <person name="Salamov A."/>
            <person name="Salazar A."/>
            <person name="She X."/>
            <person name="Smith D."/>
            <person name="Slezak T."/>
            <person name="Solovyev V."/>
            <person name="Thayer N."/>
            <person name="Tice H."/>
            <person name="Tsai M."/>
            <person name="Ustaszewska A."/>
            <person name="Vo N."/>
            <person name="Wagner M."/>
            <person name="Wheeler J."/>
            <person name="Wu K."/>
            <person name="Xie G."/>
            <person name="Yang J."/>
            <person name="Dubchak I."/>
            <person name="Furey T.S."/>
            <person name="DeJong P."/>
            <person name="Dickson M."/>
            <person name="Gordon D."/>
            <person name="Eichler E.E."/>
            <person name="Pennacchio L.A."/>
            <person name="Richardson P."/>
            <person name="Stubbs L."/>
            <person name="Rokhsar D.S."/>
            <person name="Myers R.M."/>
            <person name="Rubin E.M."/>
            <person name="Lucas S.M."/>
        </authorList>
    </citation>
    <scope>NUCLEOTIDE SEQUENCE [LARGE SCALE GENOMIC DNA]</scope>
</reference>
<reference key="3">
    <citation type="journal article" date="2004" name="Genome Res.">
        <title>The status, quality, and expansion of the NIH full-length cDNA project: the Mammalian Gene Collection (MGC).</title>
        <authorList>
            <consortium name="The MGC Project Team"/>
        </authorList>
    </citation>
    <scope>NUCLEOTIDE SEQUENCE [LARGE SCALE MRNA] (ISOFORMS 1 AND 2)</scope>
    <source>
        <tissue>Ovary</tissue>
        <tissue>Skin</tissue>
    </source>
</reference>
<reference key="4">
    <citation type="journal article" date="2010" name="J. Biol. Chem.">
        <title>Transmembrane protein 147 (TMEM147) is a novel component of the Nicalin-NOMO protein complex.</title>
        <authorList>
            <person name="Dettmer U."/>
            <person name="Kuhn P.H."/>
            <person name="Abou-Ajram C."/>
            <person name="Lichtenthaler S.F."/>
            <person name="Kruger M."/>
            <person name="Kremmer E."/>
            <person name="Haass C."/>
            <person name="Haffner C."/>
        </authorList>
    </citation>
    <scope>INTERACTION WITH NCLN AND NOMO</scope>
    <scope>SUBCELLULAR LOCATION</scope>
</reference>
<reference key="5">
    <citation type="journal article" date="2011" name="Mol. Pharmacol.">
        <title>Regulation of M(3) muscarinic receptor expression and function by transmembrane protein 147.</title>
        <authorList>
            <person name="Rosemond E."/>
            <person name="Rossi M."/>
            <person name="McMillin S.M."/>
            <person name="Scarselli M."/>
            <person name="Donaldson J.G."/>
            <person name="Wess J."/>
        </authorList>
    </citation>
    <scope>FUNCTION</scope>
    <scope>SUBCELLULAR LOCATION</scope>
    <scope>INTERACTION WITH CHRM3; CHRM1 AND AVPR2</scope>
</reference>
<reference key="6">
    <citation type="journal article" date="2020" name="Elife">
        <title>An ER translocon for multi-pass membrane protein biogenesis.</title>
        <authorList>
            <person name="McGilvray P.T."/>
            <person name="Anghel S.A."/>
            <person name="Sundaram A."/>
            <person name="Zhong F."/>
            <person name="Trnka M.J."/>
            <person name="Fuller J.R."/>
            <person name="Hu H."/>
            <person name="Burlingame A.L."/>
            <person name="Keenan R.J."/>
        </authorList>
    </citation>
    <scope>STRUCTURE BY ELECTRON MICROSCOPY (3.8 ANGSTROMS) IN COMPLEX WITH THE RIBOSOME-ASSOCIATED ER TRANSLOCON COMPLEX</scope>
    <scope>FUNCTION</scope>
    <scope>INTERACTION WITH TMCO1; CCDC47; NCLN; NOMO; SEC61A1; SEC61B AND SEC61G</scope>
</reference>
<reference key="7">
    <citation type="journal article" date="2020" name="J. Cell Sci.">
        <title>TMEM147 interacts with lamin B receptor, regulates its localization and levels, and affects cholesterol homeostasis.</title>
        <authorList>
            <person name="Christodoulou A."/>
            <person name="Maimaris G."/>
            <person name="Makrigiorgi A."/>
            <person name="Charidemou E."/>
            <person name="Luechtenborg C."/>
            <person name="Ververis A."/>
            <person name="Georgiou R."/>
            <person name="Lederer C.W."/>
            <person name="Haffner C."/>
            <person name="Bruegger B."/>
            <person name="Santama N."/>
        </authorList>
    </citation>
    <scope>FUNCTION</scope>
    <scope>SUBCELLULAR LOCATION</scope>
    <scope>INTERACTION WITH LBR AND DHCR7</scope>
</reference>
<reference key="8">
    <citation type="journal article" date="2022" name="Nature">
        <title>Substrate-driven assembly of a translocon for multipass membrane proteins.</title>
        <authorList>
            <person name="Sundaram A."/>
            <person name="Yamsek M."/>
            <person name="Zhong F."/>
            <person name="Hooda Y."/>
            <person name="Hegde R.S."/>
            <person name="Keenan R.J."/>
        </authorList>
    </citation>
    <scope>FUNCTION</scope>
    <scope>IDENTIFICATION IN THE MULTI-PASS TRANSLOCON COMPLEX</scope>
    <scope>SUBCELLULAR LOCATION</scope>
</reference>
<reference key="9">
    <citation type="journal article" date="2022" name="Am. J. Hum. Genet.">
        <title>Bi-allelic loss-of-function variants in TMEM147 cause moderate to profound intellectual disability with facial dysmorphism and pseudo-Pelger-Huet anomaly.</title>
        <authorList>
            <person name="Thomas Q."/>
            <person name="Motta M."/>
            <person name="Gautier T."/>
            <person name="Zaki M.S."/>
            <person name="Ciolfi A."/>
            <person name="Paccaud J."/>
            <person name="Girodon F."/>
            <person name="Boespflug-Tanguy O."/>
            <person name="Besnard T."/>
            <person name="Kerkhof J."/>
            <person name="McConkey H."/>
            <person name="Masson A."/>
            <person name="Denomme-Pichon A.S."/>
            <person name="Cogne B."/>
            <person name="Trochu E."/>
            <person name="Vignard V."/>
            <person name="El It F."/>
            <person name="Rodan L.H."/>
            <person name="Alkhateeb M.A."/>
            <person name="Jamra R.A."/>
            <person name="Duplomb L."/>
            <person name="Tisserant E."/>
            <person name="Duffourd Y."/>
            <person name="Bruel A.L."/>
            <person name="Jackson A."/>
            <person name="Banka S."/>
            <person name="McEntagart M."/>
            <person name="Saggar A."/>
            <person name="Gleeson J.G."/>
            <person name="Sievert D."/>
            <person name="Bae H."/>
            <person name="Lee B.H."/>
            <person name="Kwon K."/>
            <person name="Seo G.H."/>
            <person name="Lee H."/>
            <person name="Saeed A."/>
            <person name="Anjum N."/>
            <person name="Cheema H."/>
            <person name="Alawbathani S."/>
            <person name="Khan I."/>
            <person name="Pinto-Basto J."/>
            <person name="Teoh J."/>
            <person name="Wong J."/>
            <person name="Sahari U.B.M."/>
            <person name="Houlden H."/>
            <person name="Zhelcheska K."/>
            <person name="Pannetier M."/>
            <person name="Awad M.A."/>
            <person name="Lesieur-Sebellin M."/>
            <person name="Barcia G."/>
            <person name="Amiel J."/>
            <person name="Delanne J."/>
            <person name="Philippe C."/>
            <person name="Faivre L."/>
            <person name="Odent S."/>
            <person name="Bertoli-Avella A."/>
            <person name="Thauvin C."/>
            <person name="Sadikovic B."/>
            <person name="Reversade B."/>
            <person name="Maroofian R."/>
            <person name="Govin J."/>
            <person name="Tartaglia M."/>
            <person name="Vitobello A."/>
        </authorList>
    </citation>
    <scope>INVOLVEMENT IN NEDFLPH</scope>
    <scope>VARIANTS NEDFLPH ARG-7; 21-TYR--SER-224 DEL; 130-TRP--SER-224 DEL; ASN-133; 162-TYR--SER-224 DEL AND TRP-166</scope>
    <scope>CHARACTERIZATION OF VARIANTS NEDFLPH ARG-7; ASN-133; 162-TYR--SER-224 DEL AND TRP-166</scope>
    <scope>SUBCELLULAR LOCATION</scope>
</reference>
<gene>
    <name evidence="11 14" type="primary">TMEM147</name>
</gene>
<evidence type="ECO:0000250" key="1">
    <source>
        <dbReference type="UniProtKB" id="A0A8I3MKU8"/>
    </source>
</evidence>
<evidence type="ECO:0000250" key="2">
    <source>
        <dbReference type="UniProtKB" id="I6VSD2"/>
    </source>
</evidence>
<evidence type="ECO:0000255" key="3"/>
<evidence type="ECO:0000269" key="4">
    <source>
    </source>
</evidence>
<evidence type="ECO:0000269" key="5">
    <source>
    </source>
</evidence>
<evidence type="ECO:0000269" key="6">
    <source>
    </source>
</evidence>
<evidence type="ECO:0000269" key="7">
    <source>
    </source>
</evidence>
<evidence type="ECO:0000269" key="8">
    <source>
    </source>
</evidence>
<evidence type="ECO:0000269" key="9">
    <source>
    </source>
</evidence>
<evidence type="ECO:0000303" key="10">
    <source>
    </source>
</evidence>
<evidence type="ECO:0000303" key="11">
    <source>
    </source>
</evidence>
<evidence type="ECO:0000303" key="12">
    <source ref="1"/>
</evidence>
<evidence type="ECO:0000305" key="13"/>
<evidence type="ECO:0000312" key="14">
    <source>
        <dbReference type="HGNC" id="HGNC:30414"/>
    </source>
</evidence>
<feature type="chain" id="PRO_0000271701" description="BOS complex subunit TMEM147">
    <location>
        <begin position="1"/>
        <end position="224"/>
    </location>
</feature>
<feature type="transmembrane region" description="Helical" evidence="1">
    <location>
        <begin position="1"/>
        <end position="21"/>
    </location>
</feature>
<feature type="topological domain" description="Cytoplasmic" evidence="1">
    <location>
        <begin position="22"/>
        <end position="34"/>
    </location>
</feature>
<feature type="transmembrane region" description="Helical" evidence="1">
    <location>
        <begin position="35"/>
        <end position="58"/>
    </location>
</feature>
<feature type="topological domain" description="Lumenal" evidence="1">
    <location>
        <begin position="59"/>
        <end position="66"/>
    </location>
</feature>
<feature type="transmembrane region" description="Helical" evidence="1">
    <location>
        <begin position="67"/>
        <end position="88"/>
    </location>
</feature>
<feature type="topological domain" description="Cytoplasmic" evidence="1">
    <location>
        <begin position="89"/>
        <end position="98"/>
    </location>
</feature>
<feature type="transmembrane region" description="Helical" evidence="1">
    <location>
        <begin position="99"/>
        <end position="124"/>
    </location>
</feature>
<feature type="topological domain" description="Lumenal" evidence="1">
    <location>
        <begin position="125"/>
        <end position="129"/>
    </location>
</feature>
<feature type="transmembrane region" description="Helical" evidence="1">
    <location>
        <begin position="130"/>
        <end position="155"/>
    </location>
</feature>
<feature type="topological domain" description="Cytoplasmic" evidence="1">
    <location>
        <begin position="156"/>
        <end position="164"/>
    </location>
</feature>
<feature type="transmembrane region" description="Helical" evidence="1">
    <location>
        <begin position="165"/>
        <end position="187"/>
    </location>
</feature>
<feature type="topological domain" description="Lumenal" evidence="1">
    <location>
        <begin position="188"/>
        <end position="194"/>
    </location>
</feature>
<feature type="transmembrane region" description="Helical" evidence="1">
    <location>
        <begin position="195"/>
        <end position="216"/>
    </location>
</feature>
<feature type="topological domain" description="Cytoplasmic" evidence="1">
    <location>
        <begin position="217"/>
        <end position="224"/>
    </location>
</feature>
<feature type="splice variant" id="VSP_047210" description="In isoform 2." evidence="10">
    <location>
        <begin position="1"/>
        <end position="49"/>
    </location>
</feature>
<feature type="sequence variant" id="VAR_087576" description="In NEDFLPH; decreased stability; dbSNP:rs200901862." evidence="8">
    <original>G</original>
    <variation>R</variation>
    <location>
        <position position="7"/>
    </location>
</feature>
<feature type="sequence variant" id="VAR_087577" description="In NEDFLPH." evidence="8">
    <location>
        <begin position="21"/>
        <end position="224"/>
    </location>
</feature>
<feature type="sequence variant" id="VAR_087578" description="In NEDFLPH." evidence="8">
    <location>
        <begin position="130"/>
        <end position="224"/>
    </location>
</feature>
<feature type="sequence variant" id="VAR_051429" description="In dbSNP:rs1269215.">
    <original>Y</original>
    <variation>H</variation>
    <location>
        <position position="132"/>
    </location>
</feature>
<feature type="sequence variant" id="VAR_087579" description="In NEDFLPH; decreased stability." evidence="8">
    <original>I</original>
    <variation>N</variation>
    <location>
        <position position="133"/>
    </location>
</feature>
<feature type="sequence variant" id="VAR_087580" description="In NEDFLPH; impaired endoplasmic reticulum organization." evidence="8">
    <location>
        <begin position="162"/>
        <end position="224"/>
    </location>
</feature>
<feature type="sequence variant" id="VAR_087581" description="In NEDFLPH; slightly decreased stability; impaired endoplasmic reticulum organization; dbSNP:rs771380575." evidence="8">
    <original>R</original>
    <variation>W</variation>
    <location>
        <position position="166"/>
    </location>
</feature>
<feature type="sequence conflict" description="In Ref. 1; CAA77013." evidence="13" ref="1">
    <original>SG</original>
    <variation>TD</variation>
    <location>
        <begin position="24"/>
        <end position="25"/>
    </location>
</feature>
<feature type="sequence conflict" description="In Ref. 1; CAA77013." evidence="13" ref="1">
    <original>VH</original>
    <variation>GP</variation>
    <location>
        <begin position="144"/>
        <end position="145"/>
    </location>
</feature>
<feature type="sequence conflict" description="In Ref. 1; CAA77013." evidence="13" ref="1">
    <original>S</original>
    <variation>R</variation>
    <location>
        <position position="176"/>
    </location>
</feature>
<feature type="sequence conflict" description="In Ref. 1; CAA77013." evidence="13" ref="1">
    <original>ALLARAVVT</original>
    <variation>VLMAGVVVK</variation>
    <location>
        <begin position="197"/>
        <end position="205"/>
    </location>
</feature>
<feature type="sequence conflict" description="In Ref. 1; CAA77013." evidence="13" ref="1">
    <original>ALSTLAL</original>
    <variation>VIRNLAM</variation>
    <location>
        <begin position="209"/>
        <end position="215"/>
    </location>
</feature>
<protein>
    <recommendedName>
        <fullName evidence="13">BOS complex subunit TMEM147</fullName>
    </recommendedName>
    <alternativeName>
        <fullName evidence="12">Protein NIFIE 14</fullName>
    </alternativeName>
    <alternativeName>
        <fullName evidence="11">Transmembrane protein 147</fullName>
    </alternativeName>
</protein>
<accession>Q9BVK8</accession>
<accession>A8MWW0</accession>
<accession>O75790</accession>
<name>TM147_HUMAN</name>
<keyword id="KW-0002">3D-structure</keyword>
<keyword id="KW-0025">Alternative splicing</keyword>
<keyword id="KW-1003">Cell membrane</keyword>
<keyword id="KW-0225">Disease variant</keyword>
<keyword id="KW-0256">Endoplasmic reticulum</keyword>
<keyword id="KW-0991">Intellectual disability</keyword>
<keyword id="KW-0472">Membrane</keyword>
<keyword id="KW-0539">Nucleus</keyword>
<keyword id="KW-1267">Proteomics identification</keyword>
<keyword id="KW-1185">Reference proteome</keyword>
<keyword id="KW-0812">Transmembrane</keyword>
<keyword id="KW-1133">Transmembrane helix</keyword>
<comment type="function">
    <text evidence="5 6 7 9">Component of the multi-pass translocon (MPT) complex that mediates insertion of multi-pass membrane proteins into the lipid bilayer of membranes (PubMed:32820719, PubMed:36261522). The MPT complex takes over after the SEC61 complex: following membrane insertion of the first few transmembrane segments of proteins by the SEC61 complex, the MPT complex occludes the lateral gate of the SEC61 complex to promote insertion of subsequent transmembrane regions (PubMed:36261522). Also acts as a negative regulator of CHRM3 function, most likely by interfering with its trafficking to the cell membrane (PubMed:21056967). Negatively regulates CHRM3-mediated calcium mobilization and activation of RPS6KA1/p90RSK activity (PubMed:21056967). Regulates LBR localization to the nucleus inner membrane (PubMed:32694168).</text>
</comment>
<comment type="subunit">
    <text evidence="4 5 6 7 9">Component of the back of Sec61 (BOS) complex, composed of NCLN/Nicalin, NOMO (NOMO1, NOMO2 or NOMO3) and TMEM147 (PubMed:20538592, PubMed:36261522). The BOS complex is part of the multi-pass translocon (MPT) complex, composed of three subcomplexes, the GEL complex (composed of RAB5IF/OPTI and TMCO1), the BOS complex (composed of NCLN/Nicalin, NOMO and TMEM147) and the PAT complex (composed of WDR83OS/Asterix and CCDC47) (PubMed:32820719, PubMed:36261522). The MPT complex associates with the SEC61 complex (PubMed:32820719, PubMed:36261522). Interacts with CHRM3, CHRM1 and AVPR2 (PubMed:21056967). Interacts with LBR; promoting LBR localization to the nucleus inner membrane (PubMed:32694168). Interacts with DHCR7 (PubMed:32694168).</text>
</comment>
<comment type="interaction">
    <interactant intactId="EBI-348587">
        <id>Q9BVK8</id>
    </interactant>
    <interactant intactId="EBI-348517">
        <id>O95870</id>
        <label>ABHD16A</label>
    </interactant>
    <organismsDiffer>false</organismsDiffer>
    <experiments>4</experiments>
</comment>
<comment type="interaction">
    <interactant intactId="EBI-348587">
        <id>Q9BVK8</id>
    </interactant>
    <interactant intactId="EBI-525714">
        <id>P25942</id>
        <label>CD40</label>
    </interactant>
    <organismsDiffer>false</organismsDiffer>
    <experiments>3</experiments>
</comment>
<comment type="interaction">
    <interactant intactId="EBI-348587">
        <id>Q9BVK8</id>
    </interactant>
    <interactant intactId="EBI-7797864">
        <id>P11912</id>
        <label>CD79A</label>
    </interactant>
    <organismsDiffer>false</organismsDiffer>
    <experiments>3</experiments>
</comment>
<comment type="interaction">
    <interactant intactId="EBI-348587">
        <id>Q9BVK8</id>
    </interactant>
    <interactant intactId="EBI-740744">
        <id>O95471</id>
        <label>CLDN7</label>
    </interactant>
    <organismsDiffer>false</organismsDiffer>
    <experiments>3</experiments>
</comment>
<comment type="interaction">
    <interactant intactId="EBI-348587">
        <id>Q9BVK8</id>
    </interactant>
    <interactant intactId="EBI-17274839">
        <id>P58418</id>
        <label>CLRN1</label>
    </interactant>
    <organismsDiffer>false</organismsDiffer>
    <experiments>3</experiments>
</comment>
<comment type="interaction">
    <interactant intactId="EBI-348587">
        <id>Q9BVK8</id>
    </interactant>
    <interactant intactId="EBI-6942903">
        <id>Q96BA8</id>
        <label>CREB3L1</label>
    </interactant>
    <organismsDiffer>false</organismsDiffer>
    <experiments>9</experiments>
</comment>
<comment type="interaction">
    <interactant intactId="EBI-348587">
        <id>Q9BVK8</id>
    </interactant>
    <interactant intactId="EBI-2835281">
        <id>P25025</id>
        <label>CXCR2</label>
    </interactant>
    <organismsDiffer>false</organismsDiffer>
    <experiments>3</experiments>
</comment>
<comment type="interaction">
    <interactant intactId="EBI-348587">
        <id>Q9BVK8</id>
    </interactant>
    <interactant intactId="EBI-10962476">
        <id>Q9P2X0-2</id>
        <label>DPM3</label>
    </interactant>
    <organismsDiffer>false</organismsDiffer>
    <experiments>3</experiments>
</comment>
<comment type="interaction">
    <interactant intactId="EBI-348587">
        <id>Q9BVK8</id>
    </interactant>
    <interactant intactId="EBI-3915253">
        <id>Q15125</id>
        <label>EBP</label>
    </interactant>
    <organismsDiffer>false</organismsDiffer>
    <experiments>3</experiments>
</comment>
<comment type="interaction">
    <interactant intactId="EBI-348587">
        <id>Q9BVK8</id>
    </interactant>
    <interactant intactId="EBI-5241592">
        <id>P52798</id>
        <label>EFNA4</label>
    </interactant>
    <organismsDiffer>false</organismsDiffer>
    <experiments>3</experiments>
</comment>
<comment type="interaction">
    <interactant intactId="EBI-348587">
        <id>Q9BVK8</id>
    </interactant>
    <interactant intactId="EBI-17442870">
        <id>Q9Y6X5</id>
        <label>ENPP4</label>
    </interactant>
    <organismsDiffer>false</organismsDiffer>
    <experiments>3</experiments>
</comment>
<comment type="interaction">
    <interactant intactId="EBI-348587">
        <id>Q9BVK8</id>
    </interactant>
    <interactant intactId="EBI-742600">
        <id>Q9Y624</id>
        <label>F11R</label>
    </interactant>
    <organismsDiffer>false</organismsDiffer>
    <experiments>3</experiments>
</comment>
<comment type="interaction">
    <interactant intactId="EBI-348587">
        <id>Q9BVK8</id>
    </interactant>
    <interactant intactId="EBI-2833872">
        <id>O15552</id>
        <label>FFAR2</label>
    </interactant>
    <organismsDiffer>false</organismsDiffer>
    <experiments>3</experiments>
</comment>
<comment type="interaction">
    <interactant intactId="EBI-348587">
        <id>Q9BVK8</id>
    </interactant>
    <interactant intactId="EBI-17458373">
        <id>P48165</id>
        <label>GJA8</label>
    </interactant>
    <organismsDiffer>false</organismsDiffer>
    <experiments>3</experiments>
</comment>
<comment type="interaction">
    <interactant intactId="EBI-348587">
        <id>Q9BVK8</id>
    </interactant>
    <interactant intactId="EBI-712073">
        <id>Q8NBJ4</id>
        <label>GOLM1</label>
    </interactant>
    <organismsDiffer>false</organismsDiffer>
    <experiments>3</experiments>
</comment>
<comment type="interaction">
    <interactant intactId="EBI-348587">
        <id>Q9BVK8</id>
    </interactant>
    <interactant intactId="EBI-17935713">
        <id>Q96P66</id>
        <label>GPR101</label>
    </interactant>
    <organismsDiffer>false</organismsDiffer>
    <experiments>3</experiments>
</comment>
<comment type="interaction">
    <interactant intactId="EBI-348587">
        <id>Q9BVK8</id>
    </interactant>
    <interactant intactId="EBI-2927498">
        <id>O60883</id>
        <label>GPR37L1</label>
    </interactant>
    <organismsDiffer>false</organismsDiffer>
    <experiments>3</experiments>
</comment>
<comment type="interaction">
    <interactant intactId="EBI-348587">
        <id>Q9BVK8</id>
    </interactant>
    <interactant intactId="EBI-18076404">
        <id>O15529</id>
        <label>GPR42</label>
    </interactant>
    <organismsDiffer>false</organismsDiffer>
    <experiments>3</experiments>
</comment>
<comment type="interaction">
    <interactant intactId="EBI-348587">
        <id>Q9BVK8</id>
    </interactant>
    <interactant intactId="EBI-12808020">
        <id>Q9BZJ8</id>
        <label>GPR61</label>
    </interactant>
    <organismsDiffer>false</organismsDiffer>
    <experiments>3</experiments>
</comment>
<comment type="interaction">
    <interactant intactId="EBI-348587">
        <id>Q9BVK8</id>
    </interactant>
    <interactant intactId="EBI-994141">
        <id>P28335</id>
        <label>HTR2C</label>
    </interactant>
    <organismsDiffer>false</organismsDiffer>
    <experiments>5</experiments>
</comment>
<comment type="interaction">
    <interactant intactId="EBI-348587">
        <id>Q9BVK8</id>
    </interactant>
    <interactant intactId="EBI-1757512">
        <id>P26951</id>
        <label>IL3RA</label>
    </interactant>
    <organismsDiffer>false</organismsDiffer>
    <experiments>3</experiments>
</comment>
<comment type="interaction">
    <interactant intactId="EBI-348587">
        <id>Q9BVK8</id>
    </interactant>
    <interactant intactId="EBI-749265">
        <id>Q8N6L0</id>
        <label>KASH5</label>
    </interactant>
    <organismsDiffer>false</organismsDiffer>
    <experiments>3</experiments>
</comment>
<comment type="interaction">
    <interactant intactId="EBI-348587">
        <id>Q9BVK8</id>
    </interactant>
    <interactant intactId="EBI-10173166">
        <id>Q5T700</id>
        <label>LDLRAD1</label>
    </interactant>
    <organismsDiffer>false</organismsDiffer>
    <experiments>7</experiments>
</comment>
<comment type="interaction">
    <interactant intactId="EBI-348587">
        <id>Q9BVK8</id>
    </interactant>
    <interactant intactId="EBI-17490413">
        <id>A8MZ59</id>
        <label>LEUTX</label>
    </interactant>
    <organismsDiffer>false</organismsDiffer>
    <experiments>3</experiments>
</comment>
<comment type="interaction">
    <interactant intactId="EBI-348587">
        <id>Q9BVK8</id>
    </interactant>
    <interactant intactId="EBI-17566767">
        <id>Q6ZUX7</id>
        <label>LHFPL2</label>
    </interactant>
    <organismsDiffer>false</organismsDiffer>
    <experiments>3</experiments>
</comment>
<comment type="interaction">
    <interactant intactId="EBI-348587">
        <id>Q9BVK8</id>
    </interactant>
    <interactant intactId="EBI-3923617">
        <id>Q9H2K0</id>
        <label>MTIF3</label>
    </interactant>
    <organismsDiffer>false</organismsDiffer>
    <experiments>3</experiments>
</comment>
<comment type="interaction">
    <interactant intactId="EBI-348587">
        <id>Q9BVK8</id>
    </interactant>
    <interactant intactId="EBI-17263240">
        <id>P15941-11</id>
        <label>MUC1</label>
    </interactant>
    <organismsDiffer>false</organismsDiffer>
    <experiments>3</experiments>
</comment>
<comment type="interaction">
    <interactant intactId="EBI-348587">
        <id>Q9BVK8</id>
    </interactant>
    <interactant intactId="EBI-4319734">
        <id>Q9H813</id>
        <label>PACC1</label>
    </interactant>
    <organismsDiffer>false</organismsDiffer>
    <experiments>6</experiments>
</comment>
<comment type="interaction">
    <interactant intactId="EBI-348587">
        <id>Q9BVK8</id>
    </interactant>
    <interactant intactId="EBI-16427978">
        <id>Q9BQ51</id>
        <label>PDCD1LG2</label>
    </interactant>
    <organismsDiffer>false</organismsDiffer>
    <experiments>3</experiments>
</comment>
<comment type="interaction">
    <interactant intactId="EBI-348587">
        <id>Q9BVK8</id>
    </interactant>
    <interactant intactId="EBI-3919694">
        <id>P15151</id>
        <label>PVR</label>
    </interactant>
    <organismsDiffer>false</organismsDiffer>
    <experiments>3</experiments>
</comment>
<comment type="interaction">
    <interactant intactId="EBI-348587">
        <id>Q9BVK8</id>
    </interactant>
    <interactant intactId="EBI-1056589">
        <id>Q96TC7</id>
        <label>RMDN3</label>
    </interactant>
    <organismsDiffer>false</organismsDiffer>
    <experiments>3</experiments>
</comment>
<comment type="interaction">
    <interactant intactId="EBI-348587">
        <id>Q9BVK8</id>
    </interactant>
    <interactant intactId="EBI-2340249">
        <id>Q96GF1</id>
        <label>RNF185</label>
    </interactant>
    <organismsDiffer>false</organismsDiffer>
    <experiments>3</experiments>
</comment>
<comment type="interaction">
    <interactant intactId="EBI-348587">
        <id>Q9BVK8</id>
    </interactant>
    <interactant intactId="EBI-4403649">
        <id>Q969E2</id>
        <label>SCAMP4</label>
    </interactant>
    <organismsDiffer>false</organismsDiffer>
    <experiments>3</experiments>
</comment>
<comment type="interaction">
    <interactant intactId="EBI-348587">
        <id>Q9BVK8</id>
    </interactant>
    <interactant intactId="EBI-10171518">
        <id>A0PJX4</id>
        <label>SHISA3</label>
    </interactant>
    <organismsDiffer>false</organismsDiffer>
    <experiments>3</experiments>
</comment>
<comment type="interaction">
    <interactant intactId="EBI-348587">
        <id>Q9BVK8</id>
    </interactant>
    <interactant intactId="EBI-3923031">
        <id>Q14973</id>
        <label>SLC10A1</label>
    </interactant>
    <organismsDiffer>false</organismsDiffer>
    <experiments>3</experiments>
</comment>
<comment type="interaction">
    <interactant intactId="EBI-348587">
        <id>Q9BVK8</id>
    </interactant>
    <interactant intactId="EBI-12854384">
        <id>Q9Y666-2</id>
        <label>SLC12A7</label>
    </interactant>
    <organismsDiffer>false</organismsDiffer>
    <experiments>3</experiments>
</comment>
<comment type="interaction">
    <interactant intactId="EBI-348587">
        <id>Q9BVK8</id>
    </interactant>
    <interactant intactId="EBI-12808018">
        <id>Q9UKG4</id>
        <label>SLC13A4</label>
    </interactant>
    <organismsDiffer>false</organismsDiffer>
    <experiments>3</experiments>
</comment>
<comment type="interaction">
    <interactant intactId="EBI-348587">
        <id>Q9BVK8</id>
    </interactant>
    <interactant intactId="EBI-18194029">
        <id>Q96L08</id>
        <label>SUSD3</label>
    </interactant>
    <organismsDiffer>false</organismsDiffer>
    <experiments>3</experiments>
</comment>
<comment type="interaction">
    <interactant intactId="EBI-348587">
        <id>Q9BVK8</id>
    </interactant>
    <interactant intactId="EBI-7131783">
        <id>Q8N205</id>
        <label>SYNE4</label>
    </interactant>
    <organismsDiffer>false</organismsDiffer>
    <experiments>3</experiments>
</comment>
<comment type="interaction">
    <interactant intactId="EBI-348587">
        <id>Q9BVK8</id>
    </interactant>
    <interactant intactId="EBI-6655287">
        <id>P25103</id>
        <label>TACR1</label>
    </interactant>
    <organismsDiffer>false</organismsDiffer>
    <experiments>3</experiments>
</comment>
<comment type="interaction">
    <interactant intactId="EBI-348587">
        <id>Q9BVK8</id>
    </interactant>
    <interactant intactId="EBI-19027521">
        <id>Q8N6K0</id>
        <label>TEX29</label>
    </interactant>
    <organismsDiffer>false</organismsDiffer>
    <experiments>3</experiments>
</comment>
<comment type="interaction">
    <interactant intactId="EBI-348587">
        <id>Q9BVK8</id>
    </interactant>
    <interactant intactId="EBI-8638294">
        <id>Q9NUH8</id>
        <label>TMEM14B</label>
    </interactant>
    <organismsDiffer>false</organismsDiffer>
    <experiments>3</experiments>
</comment>
<comment type="interaction">
    <interactant intactId="EBI-348587">
        <id>Q9BVK8</id>
    </interactant>
    <interactant intactId="EBI-10982110">
        <id>Q96Q45-2</id>
        <label>TMEM237</label>
    </interactant>
    <organismsDiffer>false</organismsDiffer>
    <experiments>3</experiments>
</comment>
<comment type="interaction">
    <interactant intactId="EBI-348587">
        <id>Q9BVK8</id>
    </interactant>
    <interactant intactId="EBI-10314986">
        <id>Q9NWD8</id>
        <label>TMEM248</label>
    </interactant>
    <organismsDiffer>false</organismsDiffer>
    <experiments>3</experiments>
</comment>
<comment type="interaction">
    <interactant intactId="EBI-348587">
        <id>Q9BVK8</id>
    </interactant>
    <interactant intactId="EBI-8787626">
        <id>Q8N6L7</id>
        <label>TMEM252</label>
    </interactant>
    <organismsDiffer>false</organismsDiffer>
    <experiments>3</experiments>
</comment>
<comment type="interaction">
    <interactant intactId="EBI-348587">
        <id>Q9BVK8</id>
    </interactant>
    <interactant intactId="EBI-12038591">
        <id>Q69YG0</id>
        <label>TMEM42</label>
    </interactant>
    <organismsDiffer>false</organismsDiffer>
    <experiments>3</experiments>
</comment>
<comment type="interaction">
    <interactant intactId="EBI-348587">
        <id>Q9BVK8</id>
    </interactant>
    <interactant intactId="EBI-18178701">
        <id>Q4KMG9</id>
        <label>TMEM52B</label>
    </interactant>
    <organismsDiffer>false</organismsDiffer>
    <experiments>3</experiments>
</comment>
<comment type="interaction">
    <interactant intactId="EBI-348587">
        <id>Q9BVK8</id>
    </interactant>
    <interactant intactId="EBI-2466403">
        <id>O95859</id>
        <label>TSPAN12</label>
    </interactant>
    <organismsDiffer>false</organismsDiffer>
    <experiments>3</experiments>
</comment>
<comment type="subcellular location">
    <subcellularLocation>
        <location evidence="4 5 6 8 9">Endoplasmic reticulum membrane</location>
        <topology evidence="3">Multi-pass membrane protein</topology>
    </subcellularLocation>
    <subcellularLocation>
        <location evidence="6">Nucleus membrane</location>
        <topology evidence="3">Multi-pass membrane protein</topology>
    </subcellularLocation>
    <subcellularLocation>
        <location evidence="2">Cell membrane</location>
        <topology evidence="3">Multi-pass membrane protein</topology>
    </subcellularLocation>
</comment>
<comment type="alternative products">
    <event type="alternative splicing"/>
    <isoform>
        <id>Q9BVK8-1</id>
        <name>1</name>
        <sequence type="displayed"/>
    </isoform>
    <isoform>
        <id>Q9BVK8-2</id>
        <name>2</name>
        <sequence type="described" ref="VSP_047210"/>
    </isoform>
</comment>
<comment type="disease" evidence="8">
    <disease id="DI-06513">
        <name>Neurodevelopmental disorder with facial dysmorphism, absent language, and pseudo-Pelger-Huet anomaly</name>
        <acronym>NEDFLPH</acronym>
        <description>An autosomal recessive disorder with onset in infancy and characterized by global developmental delay, intellectual disability, dysmorphic facial features, coarse facies, and behavioral problems. Affected individuals may have variable findings on brain imaging, such as cortical atrophy, thin corpus callosum and enlarged ventricles. Laboratory studies show nuclear lobulation defects in a subset of neutrophils, indicating a pseudo-Pelger-Huet anomaly.</description>
        <dbReference type="MIM" id="620075"/>
    </disease>
    <text>The disease is caused by variants affecting the gene represented in this entry.</text>
</comment>
<comment type="similarity">
    <text evidence="13">Belongs to the TMEM147 family.</text>
</comment>
<comment type="sequence caution" evidence="13">
    <conflict type="frameshift">
        <sequence resource="EMBL" id="BG697070"/>
    </conflict>
</comment>
<dbReference type="EMBL" id="Y18007">
    <property type="protein sequence ID" value="CAA77013.1"/>
    <property type="molecule type" value="mRNA"/>
</dbReference>
<dbReference type="EMBL" id="AC002389">
    <property type="status" value="NOT_ANNOTATED_CDS"/>
    <property type="molecule type" value="Genomic_DNA"/>
</dbReference>
<dbReference type="EMBL" id="BC001118">
    <property type="protein sequence ID" value="AAH01118.1"/>
    <property type="molecule type" value="mRNA"/>
</dbReference>
<dbReference type="EMBL" id="BG697070">
    <property type="status" value="NOT_ANNOTATED_CDS"/>
    <property type="molecule type" value="mRNA"/>
</dbReference>
<dbReference type="CCDS" id="CCDS12466.1">
    <molecule id="Q9BVK8-1"/>
</dbReference>
<dbReference type="CCDS" id="CCDS56091.1">
    <molecule id="Q9BVK8-2"/>
</dbReference>
<dbReference type="RefSeq" id="NP_001229526.1">
    <molecule id="Q9BVK8-2"/>
    <property type="nucleotide sequence ID" value="NM_001242597.2"/>
</dbReference>
<dbReference type="RefSeq" id="NP_116024.1">
    <molecule id="Q9BVK8-1"/>
    <property type="nucleotide sequence ID" value="NM_032635.4"/>
</dbReference>
<dbReference type="PDB" id="6W6L">
    <property type="method" value="EM"/>
    <property type="resolution" value="3.84 A"/>
    <property type="chains" value="4=1-224"/>
</dbReference>
<dbReference type="PDB" id="9C7U">
    <property type="method" value="EM"/>
    <property type="resolution" value="3.65 A"/>
    <property type="chains" value="C=1-224"/>
</dbReference>
<dbReference type="PDB" id="9C7V">
    <property type="method" value="EM"/>
    <property type="resolution" value="6.60 A"/>
    <property type="chains" value="C=1-224"/>
</dbReference>
<dbReference type="PDBsum" id="6W6L"/>
<dbReference type="PDBsum" id="9C7U"/>
<dbReference type="PDBsum" id="9C7V"/>
<dbReference type="EMDB" id="EMD-45294"/>
<dbReference type="EMDB" id="EMD-45295"/>
<dbReference type="SMR" id="Q9BVK8"/>
<dbReference type="BioGRID" id="115698">
    <property type="interactions" value="93"/>
</dbReference>
<dbReference type="ComplexPortal" id="CPX-8021">
    <property type="entry name" value="BOS complex, NOMO1 variant"/>
</dbReference>
<dbReference type="ComplexPortal" id="CPX-8022">
    <property type="entry name" value="BOS complex, NOMO2 variant"/>
</dbReference>
<dbReference type="ComplexPortal" id="CPX-8023">
    <property type="entry name" value="BOS complex, NOMO3 variant"/>
</dbReference>
<dbReference type="CORUM" id="Q9BVK8"/>
<dbReference type="FunCoup" id="Q9BVK8">
    <property type="interactions" value="1157"/>
</dbReference>
<dbReference type="IntAct" id="Q9BVK8">
    <property type="interactions" value="69"/>
</dbReference>
<dbReference type="STRING" id="9606.ENSP00000222284"/>
<dbReference type="TCDB" id="8.A.145.1.1">
    <property type="family name" value="the tmem147 (tmem147) family"/>
</dbReference>
<dbReference type="iPTMnet" id="Q9BVK8"/>
<dbReference type="PhosphoSitePlus" id="Q9BVK8"/>
<dbReference type="SwissPalm" id="Q9BVK8"/>
<dbReference type="BioMuta" id="TMEM147"/>
<dbReference type="DMDM" id="74733336"/>
<dbReference type="jPOST" id="Q9BVK8"/>
<dbReference type="MassIVE" id="Q9BVK8"/>
<dbReference type="PaxDb" id="9606-ENSP00000222284"/>
<dbReference type="PeptideAtlas" id="Q9BVK8"/>
<dbReference type="ProteomicsDB" id="2272"/>
<dbReference type="ProteomicsDB" id="79215">
    <molecule id="Q9BVK8-1"/>
</dbReference>
<dbReference type="Pumba" id="Q9BVK8"/>
<dbReference type="Antibodypedia" id="54092">
    <property type="antibodies" value="86 antibodies from 24 providers"/>
</dbReference>
<dbReference type="DNASU" id="10430"/>
<dbReference type="Ensembl" id="ENST00000222284.10">
    <molecule id="Q9BVK8-1"/>
    <property type="protein sequence ID" value="ENSP00000222284.4"/>
    <property type="gene ID" value="ENSG00000105677.12"/>
</dbReference>
<dbReference type="Ensembl" id="ENST00000392204.6">
    <molecule id="Q9BVK8-2"/>
    <property type="protein sequence ID" value="ENSP00000376040.1"/>
    <property type="gene ID" value="ENSG00000105677.12"/>
</dbReference>
<dbReference type="GeneID" id="10430"/>
<dbReference type="KEGG" id="hsa:10430"/>
<dbReference type="MANE-Select" id="ENST00000222284.10">
    <property type="protein sequence ID" value="ENSP00000222284.4"/>
    <property type="RefSeq nucleotide sequence ID" value="NM_032635.4"/>
    <property type="RefSeq protein sequence ID" value="NP_116024.1"/>
</dbReference>
<dbReference type="UCSC" id="uc002oai.3">
    <molecule id="Q9BVK8-1"/>
    <property type="organism name" value="human"/>
</dbReference>
<dbReference type="AGR" id="HGNC:30414"/>
<dbReference type="CTD" id="10430"/>
<dbReference type="DisGeNET" id="10430"/>
<dbReference type="GeneCards" id="TMEM147"/>
<dbReference type="HGNC" id="HGNC:30414">
    <property type="gene designation" value="TMEM147"/>
</dbReference>
<dbReference type="HPA" id="ENSG00000105677">
    <property type="expression patterns" value="Low tissue specificity"/>
</dbReference>
<dbReference type="MalaCards" id="TMEM147"/>
<dbReference type="MIM" id="613585">
    <property type="type" value="gene"/>
</dbReference>
<dbReference type="MIM" id="620075">
    <property type="type" value="phenotype"/>
</dbReference>
<dbReference type="neXtProt" id="NX_Q9BVK8"/>
<dbReference type="OpenTargets" id="ENSG00000105677"/>
<dbReference type="PharmGKB" id="PA144596255"/>
<dbReference type="VEuPathDB" id="HostDB:ENSG00000105677"/>
<dbReference type="eggNOG" id="KOG3236">
    <property type="taxonomic scope" value="Eukaryota"/>
</dbReference>
<dbReference type="GeneTree" id="ENSGT00390000013276"/>
<dbReference type="InParanoid" id="Q9BVK8"/>
<dbReference type="OMA" id="SKCVYAG"/>
<dbReference type="OrthoDB" id="9993532at2759"/>
<dbReference type="PAN-GO" id="Q9BVK8">
    <property type="GO annotations" value="0 GO annotations based on evolutionary models"/>
</dbReference>
<dbReference type="PhylomeDB" id="Q9BVK8"/>
<dbReference type="TreeFam" id="TF314086"/>
<dbReference type="PathwayCommons" id="Q9BVK8"/>
<dbReference type="SignaLink" id="Q9BVK8"/>
<dbReference type="BioGRID-ORCS" id="10430">
    <property type="hits" value="35 hits in 1160 CRISPR screens"/>
</dbReference>
<dbReference type="ChiTaRS" id="TMEM147">
    <property type="organism name" value="human"/>
</dbReference>
<dbReference type="GenomeRNAi" id="10430"/>
<dbReference type="Pharos" id="Q9BVK8">
    <property type="development level" value="Tbio"/>
</dbReference>
<dbReference type="PRO" id="PR:Q9BVK8"/>
<dbReference type="Proteomes" id="UP000005640">
    <property type="component" value="Chromosome 19"/>
</dbReference>
<dbReference type="RNAct" id="Q9BVK8">
    <property type="molecule type" value="protein"/>
</dbReference>
<dbReference type="Bgee" id="ENSG00000105677">
    <property type="expression patterns" value="Expressed in right adrenal gland and 208 other cell types or tissues"/>
</dbReference>
<dbReference type="ExpressionAtlas" id="Q9BVK8">
    <property type="expression patterns" value="baseline and differential"/>
</dbReference>
<dbReference type="GO" id="GO:0005789">
    <property type="term" value="C:endoplasmic reticulum membrane"/>
    <property type="evidence" value="ECO:0000314"/>
    <property type="project" value="UniProtKB"/>
</dbReference>
<dbReference type="GO" id="GO:0160064">
    <property type="term" value="C:multi-pass translocon complex"/>
    <property type="evidence" value="ECO:0000314"/>
    <property type="project" value="UniProtKB"/>
</dbReference>
<dbReference type="GO" id="GO:0031965">
    <property type="term" value="C:nuclear membrane"/>
    <property type="evidence" value="ECO:0000314"/>
    <property type="project" value="UniProtKB"/>
</dbReference>
<dbReference type="GO" id="GO:0005886">
    <property type="term" value="C:plasma membrane"/>
    <property type="evidence" value="ECO:0000250"/>
    <property type="project" value="UniProtKB"/>
</dbReference>
<dbReference type="GO" id="GO:0032991">
    <property type="term" value="C:protein-containing complex"/>
    <property type="evidence" value="ECO:0000314"/>
    <property type="project" value="UniProtKB"/>
</dbReference>
<dbReference type="GO" id="GO:0043022">
    <property type="term" value="F:ribosome binding"/>
    <property type="evidence" value="ECO:0000314"/>
    <property type="project" value="UniProtKB"/>
</dbReference>
<dbReference type="GO" id="GO:0160063">
    <property type="term" value="P:multi-pass transmembrane protein insertion into ER membrane"/>
    <property type="evidence" value="ECO:0000314"/>
    <property type="project" value="UniProtKB"/>
</dbReference>
<dbReference type="GO" id="GO:0036228">
    <property type="term" value="P:protein localization to nuclear inner membrane"/>
    <property type="evidence" value="ECO:0000314"/>
    <property type="project" value="UniProtKB"/>
</dbReference>
<dbReference type="InterPro" id="IPR019164">
    <property type="entry name" value="TMEM147"/>
</dbReference>
<dbReference type="PANTHER" id="PTHR12869:SF0">
    <property type="entry name" value="BOS COMPLEX SUBUNIT TMEM147"/>
    <property type="match status" value="1"/>
</dbReference>
<dbReference type="PANTHER" id="PTHR12869">
    <property type="entry name" value="SMALL SEVEN TRANSMEMBRANE DOMAIN-CONTAINING PROTEIN"/>
    <property type="match status" value="1"/>
</dbReference>
<dbReference type="Pfam" id="PF09767">
    <property type="entry name" value="DUF2053"/>
    <property type="match status" value="1"/>
</dbReference>